<gene>
    <name type="primary">Phospho2</name>
</gene>
<feature type="chain" id="PRO_0000068834" description="Pyridoxal phosphate phosphatase PHOSPHO2">
    <location>
        <begin position="1"/>
        <end position="241"/>
    </location>
</feature>
<feature type="active site" description="Nucleophile" evidence="2">
    <location>
        <position position="8"/>
    </location>
</feature>
<feature type="active site" description="Proton donor" evidence="3">
    <location>
        <position position="10"/>
    </location>
</feature>
<feature type="binding site" evidence="3">
    <location>
        <position position="8"/>
    </location>
    <ligand>
        <name>Mg(2+)</name>
        <dbReference type="ChEBI" id="CHEBI:18420"/>
    </ligand>
</feature>
<feature type="binding site" evidence="3">
    <location>
        <position position="10"/>
    </location>
    <ligand>
        <name>Mg(2+)</name>
        <dbReference type="ChEBI" id="CHEBI:18420"/>
    </ligand>
</feature>
<feature type="binding site" evidence="2">
    <location>
        <position position="19"/>
    </location>
    <ligand>
        <name>substrate</name>
    </ligand>
</feature>
<feature type="binding site" evidence="2">
    <location>
        <position position="99"/>
    </location>
    <ligand>
        <name>substrate</name>
    </ligand>
</feature>
<feature type="binding site" evidence="3">
    <location>
        <position position="179"/>
    </location>
    <ligand>
        <name>Mg(2+)</name>
        <dbReference type="ChEBI" id="CHEBI:18420"/>
    </ligand>
</feature>
<feature type="sequence conflict" description="In Ref. 1; BAE21125." evidence="4" ref="1">
    <original>P</original>
    <variation>Q</variation>
    <location>
        <position position="186"/>
    </location>
</feature>
<protein>
    <recommendedName>
        <fullName>Pyridoxal phosphate phosphatase PHOSPHO2</fullName>
        <ecNumber evidence="1">3.1.3.74</ecNumber>
    </recommendedName>
</protein>
<sequence length="241" mass="27563">MKVLLVFDFDNTIIDDNSDTWIVQCAPDKKLPIELQDSYQKGLWTEFMGRVFKYLRDEGVKADELKRAVTSLPFTSGMIELLSFLRMNKDRFDCIIISDSNSIFIDWVLEAAAFHDVFDHVFTNPASFDSSGRLTVKNYHAHSCTRCPKNLCKNTVLGEFIDKQLQKGVRYTRIVYIGDGGNDVCPVTFLKKNDVAMPREGYTLHRTLAKMSQNLEPMESSIVVWSSGVEIISHLQFLIKM</sequence>
<keyword id="KW-0378">Hydrolase</keyword>
<keyword id="KW-0460">Magnesium</keyword>
<keyword id="KW-0479">Metal-binding</keyword>
<keyword id="KW-0663">Pyridoxal phosphate</keyword>
<keyword id="KW-1185">Reference proteome</keyword>
<evidence type="ECO:0000250" key="1">
    <source>
        <dbReference type="UniProtKB" id="Q8TCD6"/>
    </source>
</evidence>
<evidence type="ECO:0000250" key="2">
    <source>
        <dbReference type="UniProtKB" id="Q8TCT1"/>
    </source>
</evidence>
<evidence type="ECO:0000250" key="3">
    <source>
        <dbReference type="UniProtKB" id="Q96GD0"/>
    </source>
</evidence>
<evidence type="ECO:0000305" key="4"/>
<dbReference type="EC" id="3.1.3.74" evidence="1"/>
<dbReference type="EMBL" id="AK006724">
    <property type="protein sequence ID" value="BAB24714.1"/>
    <property type="molecule type" value="mRNA"/>
</dbReference>
<dbReference type="EMBL" id="AK132362">
    <property type="protein sequence ID" value="BAE21125.1"/>
    <property type="molecule type" value="mRNA"/>
</dbReference>
<dbReference type="EMBL" id="AK159551">
    <property type="protein sequence ID" value="BAE35176.1"/>
    <property type="molecule type" value="mRNA"/>
</dbReference>
<dbReference type="EMBL" id="AL845261">
    <property type="status" value="NOT_ANNOTATED_CDS"/>
    <property type="molecule type" value="Genomic_DNA"/>
</dbReference>
<dbReference type="EMBL" id="BC025612">
    <property type="protein sequence ID" value="AAH25612.1"/>
    <property type="molecule type" value="mRNA"/>
</dbReference>
<dbReference type="EMBL" id="BC031523">
    <property type="protein sequence ID" value="AAH31523.1"/>
    <property type="molecule type" value="mRNA"/>
</dbReference>
<dbReference type="CCDS" id="CCDS16099.1"/>
<dbReference type="RefSeq" id="NP_082797.1">
    <property type="nucleotide sequence ID" value="NM_028521.2"/>
</dbReference>
<dbReference type="RefSeq" id="XP_006500320.1">
    <property type="nucleotide sequence ID" value="XM_006500257.3"/>
</dbReference>
<dbReference type="SMR" id="Q9D9M5"/>
<dbReference type="FunCoup" id="Q9D9M5">
    <property type="interactions" value="206"/>
</dbReference>
<dbReference type="STRING" id="10090.ENSMUSP00000136471"/>
<dbReference type="PhosphoSitePlus" id="Q9D9M5"/>
<dbReference type="SwissPalm" id="Q9D9M5"/>
<dbReference type="PaxDb" id="10090-ENSMUSP00000028494"/>
<dbReference type="PeptideAtlas" id="Q9D9M5"/>
<dbReference type="ProteomicsDB" id="288201"/>
<dbReference type="Pumba" id="Q9D9M5"/>
<dbReference type="Antibodypedia" id="33816">
    <property type="antibodies" value="97 antibodies from 23 providers"/>
</dbReference>
<dbReference type="Ensembl" id="ENSMUST00000028494.9">
    <property type="protein sequence ID" value="ENSMUSP00000028494.3"/>
    <property type="gene ID" value="ENSMUSG00000027088.11"/>
</dbReference>
<dbReference type="Ensembl" id="ENSMUST00000112266.8">
    <property type="protein sequence ID" value="ENSMUSP00000107885.2"/>
    <property type="gene ID" value="ENSMUSG00000027088.11"/>
</dbReference>
<dbReference type="Ensembl" id="ENSMUST00000180290.2">
    <property type="protein sequence ID" value="ENSMUSP00000136471.2"/>
    <property type="gene ID" value="ENSMUSG00000027088.11"/>
</dbReference>
<dbReference type="GeneID" id="73373"/>
<dbReference type="KEGG" id="mmu:73373"/>
<dbReference type="UCSC" id="uc008jyp.1">
    <property type="organism name" value="mouse"/>
</dbReference>
<dbReference type="AGR" id="MGI:1920623"/>
<dbReference type="CTD" id="493911"/>
<dbReference type="MGI" id="MGI:1920623">
    <property type="gene designation" value="Phospho2"/>
</dbReference>
<dbReference type="VEuPathDB" id="HostDB:ENSMUSG00000027088"/>
<dbReference type="eggNOG" id="KOG3120">
    <property type="taxonomic scope" value="Eukaryota"/>
</dbReference>
<dbReference type="GeneTree" id="ENSGT00390000007741"/>
<dbReference type="HOGENOM" id="CLU_068983_0_1_1"/>
<dbReference type="InParanoid" id="Q9D9M5"/>
<dbReference type="OMA" id="HNLADCF"/>
<dbReference type="OrthoDB" id="10267182at2759"/>
<dbReference type="PhylomeDB" id="Q9D9M5"/>
<dbReference type="TreeFam" id="TF300112"/>
<dbReference type="BioGRID-ORCS" id="73373">
    <property type="hits" value="0 hits in 77 CRISPR screens"/>
</dbReference>
<dbReference type="ChiTaRS" id="Phospho2">
    <property type="organism name" value="mouse"/>
</dbReference>
<dbReference type="PRO" id="PR:Q9D9M5"/>
<dbReference type="Proteomes" id="UP000000589">
    <property type="component" value="Chromosome 2"/>
</dbReference>
<dbReference type="RNAct" id="Q9D9M5">
    <property type="molecule type" value="protein"/>
</dbReference>
<dbReference type="Bgee" id="ENSMUSG00000027088">
    <property type="expression patterns" value="Expressed in spermatocyte and 262 other cell types or tissues"/>
</dbReference>
<dbReference type="ExpressionAtlas" id="Q9D9M5">
    <property type="expression patterns" value="baseline and differential"/>
</dbReference>
<dbReference type="GO" id="GO:0046872">
    <property type="term" value="F:metal ion binding"/>
    <property type="evidence" value="ECO:0007669"/>
    <property type="project" value="UniProtKB-KW"/>
</dbReference>
<dbReference type="GO" id="GO:0033883">
    <property type="term" value="F:pyridoxal phosphatase activity"/>
    <property type="evidence" value="ECO:0007669"/>
    <property type="project" value="UniProtKB-EC"/>
</dbReference>
<dbReference type="Gene3D" id="3.40.50.1000">
    <property type="entry name" value="HAD superfamily/HAD-like"/>
    <property type="match status" value="1"/>
</dbReference>
<dbReference type="InterPro" id="IPR036412">
    <property type="entry name" value="HAD-like_sf"/>
</dbReference>
<dbReference type="InterPro" id="IPR006384">
    <property type="entry name" value="HAD_hydro_PyrdxlP_Pase-like"/>
</dbReference>
<dbReference type="InterPro" id="IPR023214">
    <property type="entry name" value="HAD_sf"/>
</dbReference>
<dbReference type="InterPro" id="IPR016965">
    <property type="entry name" value="Pase_PHOSPHO-typ"/>
</dbReference>
<dbReference type="NCBIfam" id="TIGR01489">
    <property type="entry name" value="DKMTPPase-SF"/>
    <property type="match status" value="1"/>
</dbReference>
<dbReference type="NCBIfam" id="TIGR01488">
    <property type="entry name" value="HAD-SF-IB"/>
    <property type="match status" value="1"/>
</dbReference>
<dbReference type="PANTHER" id="PTHR20889">
    <property type="entry name" value="PHOSPHATASE, ORPHAN 1, 2"/>
    <property type="match status" value="1"/>
</dbReference>
<dbReference type="PANTHER" id="PTHR20889:SF1">
    <property type="entry name" value="PYRIDOXAL PHOSPHATE PHOSPHATASE PHOSPHO2"/>
    <property type="match status" value="1"/>
</dbReference>
<dbReference type="Pfam" id="PF06888">
    <property type="entry name" value="Put_Phosphatase"/>
    <property type="match status" value="1"/>
</dbReference>
<dbReference type="PIRSF" id="PIRSF031051">
    <property type="entry name" value="PyrdxlP_Pase_PHOSPHO2"/>
    <property type="match status" value="1"/>
</dbReference>
<dbReference type="SUPFAM" id="SSF56784">
    <property type="entry name" value="HAD-like"/>
    <property type="match status" value="1"/>
</dbReference>
<accession>Q9D9M5</accession>
<accession>A2AR04</accession>
<accession>Q3V1M5</accession>
<name>PHOP2_MOUSE</name>
<organism>
    <name type="scientific">Mus musculus</name>
    <name type="common">Mouse</name>
    <dbReference type="NCBI Taxonomy" id="10090"/>
    <lineage>
        <taxon>Eukaryota</taxon>
        <taxon>Metazoa</taxon>
        <taxon>Chordata</taxon>
        <taxon>Craniata</taxon>
        <taxon>Vertebrata</taxon>
        <taxon>Euteleostomi</taxon>
        <taxon>Mammalia</taxon>
        <taxon>Eutheria</taxon>
        <taxon>Euarchontoglires</taxon>
        <taxon>Glires</taxon>
        <taxon>Rodentia</taxon>
        <taxon>Myomorpha</taxon>
        <taxon>Muroidea</taxon>
        <taxon>Muridae</taxon>
        <taxon>Murinae</taxon>
        <taxon>Mus</taxon>
        <taxon>Mus</taxon>
    </lineage>
</organism>
<reference key="1">
    <citation type="journal article" date="2005" name="Science">
        <title>The transcriptional landscape of the mammalian genome.</title>
        <authorList>
            <person name="Carninci P."/>
            <person name="Kasukawa T."/>
            <person name="Katayama S."/>
            <person name="Gough J."/>
            <person name="Frith M.C."/>
            <person name="Maeda N."/>
            <person name="Oyama R."/>
            <person name="Ravasi T."/>
            <person name="Lenhard B."/>
            <person name="Wells C."/>
            <person name="Kodzius R."/>
            <person name="Shimokawa K."/>
            <person name="Bajic V.B."/>
            <person name="Brenner S.E."/>
            <person name="Batalov S."/>
            <person name="Forrest A.R."/>
            <person name="Zavolan M."/>
            <person name="Davis M.J."/>
            <person name="Wilming L.G."/>
            <person name="Aidinis V."/>
            <person name="Allen J.E."/>
            <person name="Ambesi-Impiombato A."/>
            <person name="Apweiler R."/>
            <person name="Aturaliya R.N."/>
            <person name="Bailey T.L."/>
            <person name="Bansal M."/>
            <person name="Baxter L."/>
            <person name="Beisel K.W."/>
            <person name="Bersano T."/>
            <person name="Bono H."/>
            <person name="Chalk A.M."/>
            <person name="Chiu K.P."/>
            <person name="Choudhary V."/>
            <person name="Christoffels A."/>
            <person name="Clutterbuck D.R."/>
            <person name="Crowe M.L."/>
            <person name="Dalla E."/>
            <person name="Dalrymple B.P."/>
            <person name="de Bono B."/>
            <person name="Della Gatta G."/>
            <person name="di Bernardo D."/>
            <person name="Down T."/>
            <person name="Engstrom P."/>
            <person name="Fagiolini M."/>
            <person name="Faulkner G."/>
            <person name="Fletcher C.F."/>
            <person name="Fukushima T."/>
            <person name="Furuno M."/>
            <person name="Futaki S."/>
            <person name="Gariboldi M."/>
            <person name="Georgii-Hemming P."/>
            <person name="Gingeras T.R."/>
            <person name="Gojobori T."/>
            <person name="Green R.E."/>
            <person name="Gustincich S."/>
            <person name="Harbers M."/>
            <person name="Hayashi Y."/>
            <person name="Hensch T.K."/>
            <person name="Hirokawa N."/>
            <person name="Hill D."/>
            <person name="Huminiecki L."/>
            <person name="Iacono M."/>
            <person name="Ikeo K."/>
            <person name="Iwama A."/>
            <person name="Ishikawa T."/>
            <person name="Jakt M."/>
            <person name="Kanapin A."/>
            <person name="Katoh M."/>
            <person name="Kawasawa Y."/>
            <person name="Kelso J."/>
            <person name="Kitamura H."/>
            <person name="Kitano H."/>
            <person name="Kollias G."/>
            <person name="Krishnan S.P."/>
            <person name="Kruger A."/>
            <person name="Kummerfeld S.K."/>
            <person name="Kurochkin I.V."/>
            <person name="Lareau L.F."/>
            <person name="Lazarevic D."/>
            <person name="Lipovich L."/>
            <person name="Liu J."/>
            <person name="Liuni S."/>
            <person name="McWilliam S."/>
            <person name="Madan Babu M."/>
            <person name="Madera M."/>
            <person name="Marchionni L."/>
            <person name="Matsuda H."/>
            <person name="Matsuzawa S."/>
            <person name="Miki H."/>
            <person name="Mignone F."/>
            <person name="Miyake S."/>
            <person name="Morris K."/>
            <person name="Mottagui-Tabar S."/>
            <person name="Mulder N."/>
            <person name="Nakano N."/>
            <person name="Nakauchi H."/>
            <person name="Ng P."/>
            <person name="Nilsson R."/>
            <person name="Nishiguchi S."/>
            <person name="Nishikawa S."/>
            <person name="Nori F."/>
            <person name="Ohara O."/>
            <person name="Okazaki Y."/>
            <person name="Orlando V."/>
            <person name="Pang K.C."/>
            <person name="Pavan W.J."/>
            <person name="Pavesi G."/>
            <person name="Pesole G."/>
            <person name="Petrovsky N."/>
            <person name="Piazza S."/>
            <person name="Reed J."/>
            <person name="Reid J.F."/>
            <person name="Ring B.Z."/>
            <person name="Ringwald M."/>
            <person name="Rost B."/>
            <person name="Ruan Y."/>
            <person name="Salzberg S.L."/>
            <person name="Sandelin A."/>
            <person name="Schneider C."/>
            <person name="Schoenbach C."/>
            <person name="Sekiguchi K."/>
            <person name="Semple C.A."/>
            <person name="Seno S."/>
            <person name="Sessa L."/>
            <person name="Sheng Y."/>
            <person name="Shibata Y."/>
            <person name="Shimada H."/>
            <person name="Shimada K."/>
            <person name="Silva D."/>
            <person name="Sinclair B."/>
            <person name="Sperling S."/>
            <person name="Stupka E."/>
            <person name="Sugiura K."/>
            <person name="Sultana R."/>
            <person name="Takenaka Y."/>
            <person name="Taki K."/>
            <person name="Tammoja K."/>
            <person name="Tan S.L."/>
            <person name="Tang S."/>
            <person name="Taylor M.S."/>
            <person name="Tegner J."/>
            <person name="Teichmann S.A."/>
            <person name="Ueda H.R."/>
            <person name="van Nimwegen E."/>
            <person name="Verardo R."/>
            <person name="Wei C.L."/>
            <person name="Yagi K."/>
            <person name="Yamanishi H."/>
            <person name="Zabarovsky E."/>
            <person name="Zhu S."/>
            <person name="Zimmer A."/>
            <person name="Hide W."/>
            <person name="Bult C."/>
            <person name="Grimmond S.M."/>
            <person name="Teasdale R.D."/>
            <person name="Liu E.T."/>
            <person name="Brusic V."/>
            <person name="Quackenbush J."/>
            <person name="Wahlestedt C."/>
            <person name="Mattick J.S."/>
            <person name="Hume D.A."/>
            <person name="Kai C."/>
            <person name="Sasaki D."/>
            <person name="Tomaru Y."/>
            <person name="Fukuda S."/>
            <person name="Kanamori-Katayama M."/>
            <person name="Suzuki M."/>
            <person name="Aoki J."/>
            <person name="Arakawa T."/>
            <person name="Iida J."/>
            <person name="Imamura K."/>
            <person name="Itoh M."/>
            <person name="Kato T."/>
            <person name="Kawaji H."/>
            <person name="Kawagashira N."/>
            <person name="Kawashima T."/>
            <person name="Kojima M."/>
            <person name="Kondo S."/>
            <person name="Konno H."/>
            <person name="Nakano K."/>
            <person name="Ninomiya N."/>
            <person name="Nishio T."/>
            <person name="Okada M."/>
            <person name="Plessy C."/>
            <person name="Shibata K."/>
            <person name="Shiraki T."/>
            <person name="Suzuki S."/>
            <person name="Tagami M."/>
            <person name="Waki K."/>
            <person name="Watahiki A."/>
            <person name="Okamura-Oho Y."/>
            <person name="Suzuki H."/>
            <person name="Kawai J."/>
            <person name="Hayashizaki Y."/>
        </authorList>
    </citation>
    <scope>NUCLEOTIDE SEQUENCE [LARGE SCALE MRNA]</scope>
    <source>
        <strain>C57BL/6J</strain>
        <tissue>Head</tissue>
        <tissue>Testis</tissue>
    </source>
</reference>
<reference key="2">
    <citation type="journal article" date="2009" name="PLoS Biol.">
        <title>Lineage-specific biology revealed by a finished genome assembly of the mouse.</title>
        <authorList>
            <person name="Church D.M."/>
            <person name="Goodstadt L."/>
            <person name="Hillier L.W."/>
            <person name="Zody M.C."/>
            <person name="Goldstein S."/>
            <person name="She X."/>
            <person name="Bult C.J."/>
            <person name="Agarwala R."/>
            <person name="Cherry J.L."/>
            <person name="DiCuccio M."/>
            <person name="Hlavina W."/>
            <person name="Kapustin Y."/>
            <person name="Meric P."/>
            <person name="Maglott D."/>
            <person name="Birtle Z."/>
            <person name="Marques A.C."/>
            <person name="Graves T."/>
            <person name="Zhou S."/>
            <person name="Teague B."/>
            <person name="Potamousis K."/>
            <person name="Churas C."/>
            <person name="Place M."/>
            <person name="Herschleb J."/>
            <person name="Runnheim R."/>
            <person name="Forrest D."/>
            <person name="Amos-Landgraf J."/>
            <person name="Schwartz D.C."/>
            <person name="Cheng Z."/>
            <person name="Lindblad-Toh K."/>
            <person name="Eichler E.E."/>
            <person name="Ponting C.P."/>
        </authorList>
    </citation>
    <scope>NUCLEOTIDE SEQUENCE [LARGE SCALE GENOMIC DNA]</scope>
    <source>
        <strain>C57BL/6J</strain>
    </source>
</reference>
<reference key="3">
    <citation type="journal article" date="2004" name="Genome Res.">
        <title>The status, quality, and expansion of the NIH full-length cDNA project: the Mammalian Gene Collection (MGC).</title>
        <authorList>
            <consortium name="The MGC Project Team"/>
        </authorList>
    </citation>
    <scope>NUCLEOTIDE SEQUENCE [LARGE SCALE MRNA]</scope>
    <source>
        <strain>Czech II</strain>
        <tissue>Mammary gland</tissue>
    </source>
</reference>
<reference key="4">
    <citation type="journal article" date="2010" name="Cell">
        <title>A tissue-specific atlas of mouse protein phosphorylation and expression.</title>
        <authorList>
            <person name="Huttlin E.L."/>
            <person name="Jedrychowski M.P."/>
            <person name="Elias J.E."/>
            <person name="Goswami T."/>
            <person name="Rad R."/>
            <person name="Beausoleil S.A."/>
            <person name="Villen J."/>
            <person name="Haas W."/>
            <person name="Sowa M.E."/>
            <person name="Gygi S.P."/>
        </authorList>
    </citation>
    <scope>IDENTIFICATION BY MASS SPECTROMETRY [LARGE SCALE ANALYSIS]</scope>
    <source>
        <tissue>Brain</tissue>
        <tissue>Testis</tissue>
    </source>
</reference>
<comment type="function">
    <text evidence="1">Phosphatase that has high activity toward pyridoxal 5'-phosphate (PLP). Also active at much lower level toward pyrophosphate, phosphoethanolamine (PEA), phosphocholine (PCho), phospho-l-tyrosine, fructose-6-phosphate, p-nitrophenyl phosphate, and h-glycerophosphate.</text>
</comment>
<comment type="catalytic activity">
    <reaction evidence="1">
        <text>pyridoxal 5'-phosphate + H2O = pyridoxal + phosphate</text>
        <dbReference type="Rhea" id="RHEA:20533"/>
        <dbReference type="ChEBI" id="CHEBI:15377"/>
        <dbReference type="ChEBI" id="CHEBI:17310"/>
        <dbReference type="ChEBI" id="CHEBI:43474"/>
        <dbReference type="ChEBI" id="CHEBI:597326"/>
        <dbReference type="EC" id="3.1.3.74"/>
    </reaction>
</comment>
<comment type="cofactor">
    <cofactor evidence="2">
        <name>Mg(2+)</name>
        <dbReference type="ChEBI" id="CHEBI:18420"/>
    </cofactor>
</comment>
<comment type="similarity">
    <text evidence="4">Belongs to the HAD-like hydrolase superfamily. PHOSPHO family.</text>
</comment>
<proteinExistence type="evidence at protein level"/>